<reference key="1">
    <citation type="journal article" date="2005" name="Genome Biol.">
        <title>Full-length cDNAs from chicken bursal lymphocytes to facilitate gene function analysis.</title>
        <authorList>
            <person name="Caldwell R.B."/>
            <person name="Kierzek A.M."/>
            <person name="Arakawa H."/>
            <person name="Bezzubov Y."/>
            <person name="Zaim J."/>
            <person name="Fiedler P."/>
            <person name="Kutter S."/>
            <person name="Blagodatski A."/>
            <person name="Kostovska D."/>
            <person name="Koter M."/>
            <person name="Plachy J."/>
            <person name="Carninci P."/>
            <person name="Hayashizaki Y."/>
            <person name="Buerstedde J.-M."/>
        </authorList>
    </citation>
    <scope>NUCLEOTIDE SEQUENCE [LARGE SCALE MRNA]</scope>
    <source>
        <strain>CB</strain>
        <tissue>Bursa of Fabricius</tissue>
    </source>
</reference>
<accession>Q5ZL36</accession>
<protein>
    <recommendedName>
        <fullName>Protrudin</fullName>
    </recommendedName>
    <alternativeName>
        <fullName>Zinc finger FYVE domain-containing protein 27</fullName>
    </alternativeName>
</protein>
<organism>
    <name type="scientific">Gallus gallus</name>
    <name type="common">Chicken</name>
    <dbReference type="NCBI Taxonomy" id="9031"/>
    <lineage>
        <taxon>Eukaryota</taxon>
        <taxon>Metazoa</taxon>
        <taxon>Chordata</taxon>
        <taxon>Craniata</taxon>
        <taxon>Vertebrata</taxon>
        <taxon>Euteleostomi</taxon>
        <taxon>Archelosauria</taxon>
        <taxon>Archosauria</taxon>
        <taxon>Dinosauria</taxon>
        <taxon>Saurischia</taxon>
        <taxon>Theropoda</taxon>
        <taxon>Coelurosauria</taxon>
        <taxon>Aves</taxon>
        <taxon>Neognathae</taxon>
        <taxon>Galloanserae</taxon>
        <taxon>Galliformes</taxon>
        <taxon>Phasianidae</taxon>
        <taxon>Phasianinae</taxon>
        <taxon>Gallus</taxon>
    </lineage>
</organism>
<keyword id="KW-1003">Cell membrane</keyword>
<keyword id="KW-0966">Cell projection</keyword>
<keyword id="KW-0256">Endoplasmic reticulum</keyword>
<keyword id="KW-0967">Endosome</keyword>
<keyword id="KW-0472">Membrane</keyword>
<keyword id="KW-0479">Metal-binding</keyword>
<keyword id="KW-1185">Reference proteome</keyword>
<keyword id="KW-0812">Transmembrane</keyword>
<keyword id="KW-1133">Transmembrane helix</keyword>
<keyword id="KW-0862">Zinc</keyword>
<keyword id="KW-0863">Zinc-finger</keyword>
<dbReference type="EMBL" id="AJ719898">
    <property type="protein sequence ID" value="CAG31557.1"/>
    <property type="molecule type" value="mRNA"/>
</dbReference>
<dbReference type="RefSeq" id="NP_001034393.1">
    <property type="nucleotide sequence ID" value="NM_001039304.1"/>
</dbReference>
<dbReference type="SMR" id="Q5ZL36"/>
<dbReference type="FunCoup" id="Q5ZL36">
    <property type="interactions" value="1201"/>
</dbReference>
<dbReference type="STRING" id="9031.ENSGALP00000042307"/>
<dbReference type="PaxDb" id="9031-ENSGALP00000042307"/>
<dbReference type="GeneID" id="423839"/>
<dbReference type="KEGG" id="gga:423839"/>
<dbReference type="CTD" id="118813"/>
<dbReference type="VEuPathDB" id="HostDB:geneid_423839"/>
<dbReference type="eggNOG" id="ENOG502QVKC">
    <property type="taxonomic scope" value="Eukaryota"/>
</dbReference>
<dbReference type="InParanoid" id="Q5ZL36"/>
<dbReference type="OrthoDB" id="5975347at2759"/>
<dbReference type="PhylomeDB" id="Q5ZL36"/>
<dbReference type="PRO" id="PR:Q5ZL36"/>
<dbReference type="Proteomes" id="UP000000539">
    <property type="component" value="Unassembled WGS sequence"/>
</dbReference>
<dbReference type="GO" id="GO:0030424">
    <property type="term" value="C:axon"/>
    <property type="evidence" value="ECO:0000250"/>
    <property type="project" value="UniProtKB"/>
</dbReference>
<dbReference type="GO" id="GO:0030425">
    <property type="term" value="C:dendrite"/>
    <property type="evidence" value="ECO:0000250"/>
    <property type="project" value="UniProtKB"/>
</dbReference>
<dbReference type="GO" id="GO:0005783">
    <property type="term" value="C:endoplasmic reticulum"/>
    <property type="evidence" value="ECO:0000250"/>
    <property type="project" value="UniProtKB"/>
</dbReference>
<dbReference type="GO" id="GO:0005789">
    <property type="term" value="C:endoplasmic reticulum membrane"/>
    <property type="evidence" value="ECO:0000250"/>
    <property type="project" value="UniProtKB"/>
</dbReference>
<dbReference type="GO" id="GO:0071782">
    <property type="term" value="C:endoplasmic reticulum tubular network"/>
    <property type="evidence" value="ECO:0000250"/>
    <property type="project" value="UniProtKB"/>
</dbReference>
<dbReference type="GO" id="GO:0032584">
    <property type="term" value="C:growth cone membrane"/>
    <property type="evidence" value="ECO:0000250"/>
    <property type="project" value="UniProtKB"/>
</dbReference>
<dbReference type="GO" id="GO:0016020">
    <property type="term" value="C:membrane"/>
    <property type="evidence" value="ECO:0000250"/>
    <property type="project" value="UniProtKB"/>
</dbReference>
<dbReference type="GO" id="GO:0055038">
    <property type="term" value="C:recycling endosome membrane"/>
    <property type="evidence" value="ECO:0000250"/>
    <property type="project" value="UniProtKB"/>
</dbReference>
<dbReference type="GO" id="GO:0008270">
    <property type="term" value="F:zinc ion binding"/>
    <property type="evidence" value="ECO:0007669"/>
    <property type="project" value="UniProtKB-KW"/>
</dbReference>
<dbReference type="GO" id="GO:0071787">
    <property type="term" value="P:endoplasmic reticulum tubular network formation"/>
    <property type="evidence" value="ECO:0000250"/>
    <property type="project" value="UniProtKB"/>
</dbReference>
<dbReference type="GO" id="GO:0031175">
    <property type="term" value="P:neuron projection development"/>
    <property type="evidence" value="ECO:0000250"/>
    <property type="project" value="UniProtKB"/>
</dbReference>
<dbReference type="GO" id="GO:0048011">
    <property type="term" value="P:neurotrophin TRK receptor signaling pathway"/>
    <property type="evidence" value="ECO:0000250"/>
    <property type="project" value="UniProtKB"/>
</dbReference>
<dbReference type="GO" id="GO:0045773">
    <property type="term" value="P:positive regulation of axon extension"/>
    <property type="evidence" value="ECO:0000250"/>
    <property type="project" value="UniProtKB"/>
</dbReference>
<dbReference type="GO" id="GO:0072659">
    <property type="term" value="P:protein localization to plasma membrane"/>
    <property type="evidence" value="ECO:0000250"/>
    <property type="project" value="UniProtKB"/>
</dbReference>
<dbReference type="GO" id="GO:0016192">
    <property type="term" value="P:vesicle-mediated transport"/>
    <property type="evidence" value="ECO:0000250"/>
    <property type="project" value="UniProtKB"/>
</dbReference>
<dbReference type="CDD" id="cd15723">
    <property type="entry name" value="FYVE_protrudin"/>
    <property type="match status" value="1"/>
</dbReference>
<dbReference type="FunFam" id="3.30.40.10:FF:000102">
    <property type="entry name" value="protrudin isoform X2"/>
    <property type="match status" value="1"/>
</dbReference>
<dbReference type="Gene3D" id="3.30.40.10">
    <property type="entry name" value="Zinc/RING finger domain, C3HC4 (zinc finger)"/>
    <property type="match status" value="1"/>
</dbReference>
<dbReference type="InterPro" id="IPR042405">
    <property type="entry name" value="Protrudin"/>
</dbReference>
<dbReference type="InterPro" id="IPR000306">
    <property type="entry name" value="Znf_FYVE"/>
</dbReference>
<dbReference type="InterPro" id="IPR017455">
    <property type="entry name" value="Znf_FYVE-rel"/>
</dbReference>
<dbReference type="InterPro" id="IPR011011">
    <property type="entry name" value="Znf_FYVE_PHD"/>
</dbReference>
<dbReference type="InterPro" id="IPR013083">
    <property type="entry name" value="Znf_RING/FYVE/PHD"/>
</dbReference>
<dbReference type="PANTHER" id="PTHR14543">
    <property type="entry name" value="PROTRUDIN"/>
    <property type="match status" value="1"/>
</dbReference>
<dbReference type="PANTHER" id="PTHR14543:SF1">
    <property type="entry name" value="PROTRUDIN"/>
    <property type="match status" value="1"/>
</dbReference>
<dbReference type="Pfam" id="PF01363">
    <property type="entry name" value="FYVE"/>
    <property type="match status" value="1"/>
</dbReference>
<dbReference type="SMART" id="SM00064">
    <property type="entry name" value="FYVE"/>
    <property type="match status" value="1"/>
</dbReference>
<dbReference type="SUPFAM" id="SSF57903">
    <property type="entry name" value="FYVE/PHD zinc finger"/>
    <property type="match status" value="1"/>
</dbReference>
<dbReference type="PROSITE" id="PS50178">
    <property type="entry name" value="ZF_FYVE"/>
    <property type="match status" value="1"/>
</dbReference>
<gene>
    <name type="primary">ZFYVE27</name>
    <name type="ORF">RCJMB04_7p9</name>
</gene>
<proteinExistence type="evidence at transcript level"/>
<sequence>MQAAERDGVAGGLEATAAVAATGGGEASSEPPSPPKAASFDLLDLVRSYRRLELYLEPLRDAAEGVRALLRWQRPLCSLLVCLGLNFLLLTLDQAAWYSVLALLVLLPALLGYLQETYRVRPSERELLRRKYHSVRREDLRRVQLSRQEALAQVKCFLIQLEGFLSGLCYNCEAVYRVLYWENPTVSSQFYGALLGSVCILYLLPLCWVMAILNSTLFLGNSQFYQVIKELKASVEQSLGTKPLESAPEPAKPLPTDAPPDRTPTPTSTEDLTPGSVEEAEEAEPDEEFKDAIEEDDEGSQCSADFDLSLPDNGFMSKNDVIRSKVSRLTERLRKRYPSNNFGTCTGCGATFSVLKKRRSCSNCGNSFCSRCCSFKVPKAVMGATAPEAQRETVFVCAQCNQMLIK</sequence>
<comment type="function">
    <text evidence="1 2">Key regulator of RAB11-dependent vesicular trafficking during neurite extension through polarized membrane transport. Promotes axonal elongation and contributes to the establishment of neuronal cell polarity. Involved in nerve growth factor-induced neurite formation in VAPA-dependent manner. Contributes to both the formation and stabilization of the tubular ER network. Involved in ER morphogenesis by regulating the sheet-to-tubule balance and possibly the density of tubule interconnections.</text>
</comment>
<comment type="subunit">
    <text evidence="2">Can form homooligomers (monomers, dimers and tetramers).</text>
</comment>
<comment type="subcellular location">
    <subcellularLocation>
        <location evidence="3">Recycling endosome membrane</location>
        <topology evidence="4">Multi-pass membrane protein</topology>
    </subcellularLocation>
    <subcellularLocation>
        <location evidence="2">Endoplasmic reticulum membrane</location>
        <topology evidence="4">Multi-pass membrane protein</topology>
    </subcellularLocation>
    <subcellularLocation>
        <location evidence="1">Cell projection</location>
        <location evidence="1">Growth cone membrane</location>
        <topology evidence="4">Multi-pass membrane protein</topology>
    </subcellularLocation>
    <text evidence="2">Localizes to endoplasmic reticulum tubular network.</text>
</comment>
<evidence type="ECO:0000250" key="1">
    <source>
        <dbReference type="UniProtKB" id="Q3TXX3"/>
    </source>
</evidence>
<evidence type="ECO:0000250" key="2">
    <source>
        <dbReference type="UniProtKB" id="Q5T4F4"/>
    </source>
</evidence>
<evidence type="ECO:0000250" key="3">
    <source>
        <dbReference type="UniProtKB" id="Q6P7B7"/>
    </source>
</evidence>
<evidence type="ECO:0000255" key="4"/>
<evidence type="ECO:0000255" key="5">
    <source>
        <dbReference type="PROSITE-ProRule" id="PRU00091"/>
    </source>
</evidence>
<evidence type="ECO:0000256" key="6">
    <source>
        <dbReference type="SAM" id="MobiDB-lite"/>
    </source>
</evidence>
<feature type="chain" id="PRO_0000245604" description="Protrudin">
    <location>
        <begin position="1"/>
        <end position="406"/>
    </location>
</feature>
<feature type="topological domain" description="Cytoplasmic" evidence="2">
    <location>
        <begin position="1"/>
        <end position="71"/>
    </location>
</feature>
<feature type="transmembrane region" description="Helical" evidence="4">
    <location>
        <begin position="72"/>
        <end position="92"/>
    </location>
</feature>
<feature type="topological domain" description="Lumenal" evidence="2">
    <location>
        <position position="93"/>
    </location>
</feature>
<feature type="transmembrane region" description="Helical" evidence="4">
    <location>
        <begin position="94"/>
        <end position="114"/>
    </location>
</feature>
<feature type="topological domain" description="Cytoplasmic" evidence="2">
    <location>
        <begin position="115"/>
        <end position="192"/>
    </location>
</feature>
<feature type="intramembrane region" description="Helical" evidence="4">
    <location>
        <begin position="193"/>
        <end position="213"/>
    </location>
</feature>
<feature type="topological domain" description="Cytoplasmic" evidence="2">
    <location>
        <begin position="214"/>
        <end position="406"/>
    </location>
</feature>
<feature type="zinc finger region" description="FYVE-type" evidence="5">
    <location>
        <begin position="339"/>
        <end position="405"/>
    </location>
</feature>
<feature type="region of interest" description="Sufficient for localization to endoplasmic reticulum tubular network" evidence="2">
    <location>
        <begin position="1"/>
        <end position="210"/>
    </location>
</feature>
<feature type="region of interest" description="Sufficient for homooligomerization" evidence="2">
    <location>
        <begin position="1"/>
        <end position="97"/>
    </location>
</feature>
<feature type="region of interest" description="Disordered" evidence="6">
    <location>
        <begin position="239"/>
        <end position="295"/>
    </location>
</feature>
<feature type="compositionally biased region" description="Pro residues" evidence="6">
    <location>
        <begin position="250"/>
        <end position="263"/>
    </location>
</feature>
<feature type="compositionally biased region" description="Acidic residues" evidence="6">
    <location>
        <begin position="278"/>
        <end position="295"/>
    </location>
</feature>
<feature type="binding site" evidence="5">
    <location>
        <position position="345"/>
    </location>
    <ligand>
        <name>Zn(2+)</name>
        <dbReference type="ChEBI" id="CHEBI:29105"/>
        <label>1</label>
    </ligand>
</feature>
<feature type="binding site" evidence="5">
    <location>
        <position position="348"/>
    </location>
    <ligand>
        <name>Zn(2+)</name>
        <dbReference type="ChEBI" id="CHEBI:29105"/>
        <label>1</label>
    </ligand>
</feature>
<feature type="binding site" evidence="5">
    <location>
        <position position="361"/>
    </location>
    <ligand>
        <name>Zn(2+)</name>
        <dbReference type="ChEBI" id="CHEBI:29105"/>
        <label>2</label>
    </ligand>
</feature>
<feature type="binding site" evidence="5">
    <location>
        <position position="364"/>
    </location>
    <ligand>
        <name>Zn(2+)</name>
        <dbReference type="ChEBI" id="CHEBI:29105"/>
        <label>2</label>
    </ligand>
</feature>
<feature type="binding site" evidence="5">
    <location>
        <position position="369"/>
    </location>
    <ligand>
        <name>Zn(2+)</name>
        <dbReference type="ChEBI" id="CHEBI:29105"/>
        <label>1</label>
    </ligand>
</feature>
<feature type="binding site" evidence="5">
    <location>
        <position position="372"/>
    </location>
    <ligand>
        <name>Zn(2+)</name>
        <dbReference type="ChEBI" id="CHEBI:29105"/>
        <label>1</label>
    </ligand>
</feature>
<feature type="binding site" evidence="5">
    <location>
        <position position="397"/>
    </location>
    <ligand>
        <name>Zn(2+)</name>
        <dbReference type="ChEBI" id="CHEBI:29105"/>
        <label>2</label>
    </ligand>
</feature>
<feature type="binding site" evidence="5">
    <location>
        <position position="400"/>
    </location>
    <ligand>
        <name>Zn(2+)</name>
        <dbReference type="ChEBI" id="CHEBI:29105"/>
        <label>2</label>
    </ligand>
</feature>
<name>ZFY27_CHICK</name>